<keyword id="KW-1185">Reference proteome</keyword>
<keyword id="KW-0687">Ribonucleoprotein</keyword>
<keyword id="KW-0689">Ribosomal protein</keyword>
<keyword id="KW-0694">RNA-binding</keyword>
<keyword id="KW-0699">rRNA-binding</keyword>
<keyword id="KW-0820">tRNA-binding</keyword>
<proteinExistence type="inferred from homology"/>
<reference key="1">
    <citation type="journal article" date="2008" name="Proc. Natl. Acad. Sci. U.S.A.">
        <title>The genome of Cyanothece 51142, a unicellular diazotrophic cyanobacterium important in the marine nitrogen cycle.</title>
        <authorList>
            <person name="Welsh E.A."/>
            <person name="Liberton M."/>
            <person name="Stoeckel J."/>
            <person name="Loh T."/>
            <person name="Elvitigala T."/>
            <person name="Wang C."/>
            <person name="Wollam A."/>
            <person name="Fulton R.S."/>
            <person name="Clifton S.W."/>
            <person name="Jacobs J.M."/>
            <person name="Aurora R."/>
            <person name="Ghosh B.K."/>
            <person name="Sherman L.A."/>
            <person name="Smith R.D."/>
            <person name="Wilson R.K."/>
            <person name="Pakrasi H.B."/>
        </authorList>
    </citation>
    <scope>NUCLEOTIDE SEQUENCE [LARGE SCALE GENOMIC DNA]</scope>
    <source>
        <strain>ATCC 51142 / BH68</strain>
    </source>
</reference>
<organism>
    <name type="scientific">Crocosphaera subtropica (strain ATCC 51142 / BH68)</name>
    <name type="common">Cyanothece sp. (strain ATCC 51142)</name>
    <dbReference type="NCBI Taxonomy" id="43989"/>
    <lineage>
        <taxon>Bacteria</taxon>
        <taxon>Bacillati</taxon>
        <taxon>Cyanobacteriota</taxon>
        <taxon>Cyanophyceae</taxon>
        <taxon>Oscillatoriophycideae</taxon>
        <taxon>Chroococcales</taxon>
        <taxon>Aphanothecaceae</taxon>
        <taxon>Crocosphaera</taxon>
        <taxon>Crocosphaera subtropica</taxon>
    </lineage>
</organism>
<feature type="chain" id="PRO_1000135596" description="Small ribosomal subunit protein uS7">
    <location>
        <begin position="1"/>
        <end position="156"/>
    </location>
</feature>
<name>RS7_CROS5</name>
<evidence type="ECO:0000255" key="1">
    <source>
        <dbReference type="HAMAP-Rule" id="MF_00480"/>
    </source>
</evidence>
<evidence type="ECO:0000305" key="2"/>
<protein>
    <recommendedName>
        <fullName evidence="1">Small ribosomal subunit protein uS7</fullName>
    </recommendedName>
    <alternativeName>
        <fullName evidence="2">30S ribosomal protein S7</fullName>
    </alternativeName>
</protein>
<sequence>MSRRGNIKRKPVPPDPIYNSCLLNMTIRRVMKSGKKSVAAGIVYDAMTMIKERTGEEPLEVFERAMKNLTPLVEVKARRVGGATYQVPMEVRPARGTTLALRWLIRYSRIRGGRSMASKLANEIMDAANETGAAMKKRDETHRMADANKAFAHYRY</sequence>
<accession>B1WQY6</accession>
<dbReference type="EMBL" id="CP000806">
    <property type="protein sequence ID" value="ACB53438.1"/>
    <property type="molecule type" value="Genomic_DNA"/>
</dbReference>
<dbReference type="RefSeq" id="WP_008276351.1">
    <property type="nucleotide sequence ID" value="NC_010546.1"/>
</dbReference>
<dbReference type="SMR" id="B1WQY6"/>
<dbReference type="STRING" id="43989.cce_4090"/>
<dbReference type="KEGG" id="cyt:cce_4090"/>
<dbReference type="eggNOG" id="COG0049">
    <property type="taxonomic scope" value="Bacteria"/>
</dbReference>
<dbReference type="HOGENOM" id="CLU_072226_1_1_3"/>
<dbReference type="OrthoDB" id="9807653at2"/>
<dbReference type="Proteomes" id="UP000001203">
    <property type="component" value="Chromosome circular"/>
</dbReference>
<dbReference type="GO" id="GO:0015935">
    <property type="term" value="C:small ribosomal subunit"/>
    <property type="evidence" value="ECO:0007669"/>
    <property type="project" value="InterPro"/>
</dbReference>
<dbReference type="GO" id="GO:0019843">
    <property type="term" value="F:rRNA binding"/>
    <property type="evidence" value="ECO:0007669"/>
    <property type="project" value="UniProtKB-UniRule"/>
</dbReference>
<dbReference type="GO" id="GO:0003735">
    <property type="term" value="F:structural constituent of ribosome"/>
    <property type="evidence" value="ECO:0007669"/>
    <property type="project" value="InterPro"/>
</dbReference>
<dbReference type="GO" id="GO:0000049">
    <property type="term" value="F:tRNA binding"/>
    <property type="evidence" value="ECO:0007669"/>
    <property type="project" value="UniProtKB-UniRule"/>
</dbReference>
<dbReference type="GO" id="GO:0006412">
    <property type="term" value="P:translation"/>
    <property type="evidence" value="ECO:0007669"/>
    <property type="project" value="UniProtKB-UniRule"/>
</dbReference>
<dbReference type="CDD" id="cd14871">
    <property type="entry name" value="uS7_Chloroplast"/>
    <property type="match status" value="1"/>
</dbReference>
<dbReference type="FunFam" id="1.10.455.10:FF:000001">
    <property type="entry name" value="30S ribosomal protein S7"/>
    <property type="match status" value="1"/>
</dbReference>
<dbReference type="Gene3D" id="1.10.455.10">
    <property type="entry name" value="Ribosomal protein S7 domain"/>
    <property type="match status" value="1"/>
</dbReference>
<dbReference type="HAMAP" id="MF_00480_B">
    <property type="entry name" value="Ribosomal_uS7_B"/>
    <property type="match status" value="1"/>
</dbReference>
<dbReference type="InterPro" id="IPR000235">
    <property type="entry name" value="Ribosomal_uS7"/>
</dbReference>
<dbReference type="InterPro" id="IPR005717">
    <property type="entry name" value="Ribosomal_uS7_bac/org-type"/>
</dbReference>
<dbReference type="InterPro" id="IPR020606">
    <property type="entry name" value="Ribosomal_uS7_CS"/>
</dbReference>
<dbReference type="InterPro" id="IPR023798">
    <property type="entry name" value="Ribosomal_uS7_dom"/>
</dbReference>
<dbReference type="InterPro" id="IPR036823">
    <property type="entry name" value="Ribosomal_uS7_dom_sf"/>
</dbReference>
<dbReference type="NCBIfam" id="TIGR01029">
    <property type="entry name" value="rpsG_bact"/>
    <property type="match status" value="1"/>
</dbReference>
<dbReference type="PANTHER" id="PTHR11205">
    <property type="entry name" value="RIBOSOMAL PROTEIN S7"/>
    <property type="match status" value="1"/>
</dbReference>
<dbReference type="Pfam" id="PF00177">
    <property type="entry name" value="Ribosomal_S7"/>
    <property type="match status" value="1"/>
</dbReference>
<dbReference type="PIRSF" id="PIRSF002122">
    <property type="entry name" value="RPS7p_RPS7a_RPS5e_RPS7o"/>
    <property type="match status" value="1"/>
</dbReference>
<dbReference type="SUPFAM" id="SSF47973">
    <property type="entry name" value="Ribosomal protein S7"/>
    <property type="match status" value="1"/>
</dbReference>
<dbReference type="PROSITE" id="PS00052">
    <property type="entry name" value="RIBOSOMAL_S7"/>
    <property type="match status" value="1"/>
</dbReference>
<comment type="function">
    <text evidence="1">One of the primary rRNA binding proteins, it binds directly to 16S rRNA where it nucleates assembly of the head domain of the 30S subunit. Is located at the subunit interface close to the decoding center, probably blocks exit of the E-site tRNA.</text>
</comment>
<comment type="subunit">
    <text evidence="1">Part of the 30S ribosomal subunit. Contacts proteins S9 and S11.</text>
</comment>
<comment type="similarity">
    <text evidence="1">Belongs to the universal ribosomal protein uS7 family.</text>
</comment>
<gene>
    <name evidence="1" type="primary">rpsG</name>
    <name evidence="1" type="synonym">rps7</name>
    <name type="ordered locus">cce_4090</name>
</gene>